<accession>A4X621</accession>
<name>PYRF_SALTO</name>
<organism>
    <name type="scientific">Salinispora tropica (strain ATCC BAA-916 / DSM 44818 / JCM 13857 / NBRC 105044 / CNB-440)</name>
    <dbReference type="NCBI Taxonomy" id="369723"/>
    <lineage>
        <taxon>Bacteria</taxon>
        <taxon>Bacillati</taxon>
        <taxon>Actinomycetota</taxon>
        <taxon>Actinomycetes</taxon>
        <taxon>Micromonosporales</taxon>
        <taxon>Micromonosporaceae</taxon>
        <taxon>Salinispora</taxon>
    </lineage>
</organism>
<feature type="chain" id="PRO_1000085578" description="Orotidine 5'-phosphate decarboxylase">
    <location>
        <begin position="1"/>
        <end position="278"/>
    </location>
</feature>
<feature type="active site" description="Proton donor" evidence="1">
    <location>
        <position position="96"/>
    </location>
</feature>
<reference key="1">
    <citation type="journal article" date="2007" name="Proc. Natl. Acad. Sci. U.S.A.">
        <title>Genome sequencing reveals complex secondary metabolome in the marine actinomycete Salinispora tropica.</title>
        <authorList>
            <person name="Udwary D.W."/>
            <person name="Zeigler L."/>
            <person name="Asolkar R.N."/>
            <person name="Singan V."/>
            <person name="Lapidus A."/>
            <person name="Fenical W."/>
            <person name="Jensen P.R."/>
            <person name="Moore B.S."/>
        </authorList>
    </citation>
    <scope>NUCLEOTIDE SEQUENCE [LARGE SCALE GENOMIC DNA]</scope>
    <source>
        <strain>ATCC BAA-916 / DSM 44818 / JCM 13857 / NBRC 105044 / CNB-440</strain>
    </source>
</reference>
<comment type="catalytic activity">
    <reaction evidence="1">
        <text>orotidine 5'-phosphate + H(+) = UMP + CO2</text>
        <dbReference type="Rhea" id="RHEA:11596"/>
        <dbReference type="ChEBI" id="CHEBI:15378"/>
        <dbReference type="ChEBI" id="CHEBI:16526"/>
        <dbReference type="ChEBI" id="CHEBI:57538"/>
        <dbReference type="ChEBI" id="CHEBI:57865"/>
        <dbReference type="EC" id="4.1.1.23"/>
    </reaction>
</comment>
<comment type="pathway">
    <text evidence="1">Pyrimidine metabolism; UMP biosynthesis via de novo pathway; UMP from orotate: step 2/2.</text>
</comment>
<comment type="similarity">
    <text evidence="1">Belongs to the OMP decarboxylase family. Type 2 subfamily.</text>
</comment>
<sequence>MESFGARLHRVVGERGPLCVGIDPHPGLLERWGLDDDVRGLERFAGTVVEALGDRVAVVKPQSAFFERFGSRGVAVLESTIRQLRTAGSLVLLDVKRGDIGSTVAAYASAYLDPSSPLHVDAVTVSPYLGVGALAPMFELAAAQGGGVFVLALTSNPEGAAVQRARTADGRTVAQLVIDEISQLNAGARPLGSVGLVVGATIGQTGHELAAVNGPLLAPGLGAQGASAADLRVVFGSSLPAVLPTYSREVLAAGPDVVALRGAADRVLADCRAALTGS</sequence>
<gene>
    <name evidence="1" type="primary">pyrF</name>
    <name type="ordered locus">Strop_1859</name>
</gene>
<evidence type="ECO:0000255" key="1">
    <source>
        <dbReference type="HAMAP-Rule" id="MF_01215"/>
    </source>
</evidence>
<proteinExistence type="inferred from homology"/>
<keyword id="KW-0210">Decarboxylase</keyword>
<keyword id="KW-0456">Lyase</keyword>
<keyword id="KW-0665">Pyrimidine biosynthesis</keyword>
<keyword id="KW-1185">Reference proteome</keyword>
<protein>
    <recommendedName>
        <fullName evidence="1">Orotidine 5'-phosphate decarboxylase</fullName>
        <ecNumber evidence="1">4.1.1.23</ecNumber>
    </recommendedName>
    <alternativeName>
        <fullName evidence="1">OMP decarboxylase</fullName>
        <shortName evidence="1">OMPDCase</shortName>
        <shortName evidence="1">OMPdecase</shortName>
    </alternativeName>
</protein>
<dbReference type="EC" id="4.1.1.23" evidence="1"/>
<dbReference type="EMBL" id="CP000667">
    <property type="protein sequence ID" value="ABP54321.1"/>
    <property type="molecule type" value="Genomic_DNA"/>
</dbReference>
<dbReference type="RefSeq" id="WP_011905752.1">
    <property type="nucleotide sequence ID" value="NC_009380.1"/>
</dbReference>
<dbReference type="SMR" id="A4X621"/>
<dbReference type="STRING" id="369723.Strop_1859"/>
<dbReference type="KEGG" id="stp:Strop_1859"/>
<dbReference type="PATRIC" id="fig|369723.5.peg.1907"/>
<dbReference type="eggNOG" id="COG0284">
    <property type="taxonomic scope" value="Bacteria"/>
</dbReference>
<dbReference type="HOGENOM" id="CLU_060704_0_0_11"/>
<dbReference type="UniPathway" id="UPA00070">
    <property type="reaction ID" value="UER00120"/>
</dbReference>
<dbReference type="Proteomes" id="UP000000235">
    <property type="component" value="Chromosome"/>
</dbReference>
<dbReference type="GO" id="GO:0004590">
    <property type="term" value="F:orotidine-5'-phosphate decarboxylase activity"/>
    <property type="evidence" value="ECO:0007669"/>
    <property type="project" value="UniProtKB-UniRule"/>
</dbReference>
<dbReference type="GO" id="GO:0006207">
    <property type="term" value="P:'de novo' pyrimidine nucleobase biosynthetic process"/>
    <property type="evidence" value="ECO:0007669"/>
    <property type="project" value="InterPro"/>
</dbReference>
<dbReference type="GO" id="GO:0044205">
    <property type="term" value="P:'de novo' UMP biosynthetic process"/>
    <property type="evidence" value="ECO:0007669"/>
    <property type="project" value="UniProtKB-UniRule"/>
</dbReference>
<dbReference type="CDD" id="cd04725">
    <property type="entry name" value="OMP_decarboxylase_like"/>
    <property type="match status" value="1"/>
</dbReference>
<dbReference type="Gene3D" id="3.20.20.70">
    <property type="entry name" value="Aldolase class I"/>
    <property type="match status" value="1"/>
</dbReference>
<dbReference type="HAMAP" id="MF_01215">
    <property type="entry name" value="OMPdecase_type2"/>
    <property type="match status" value="1"/>
</dbReference>
<dbReference type="InterPro" id="IPR013785">
    <property type="entry name" value="Aldolase_TIM"/>
</dbReference>
<dbReference type="InterPro" id="IPR018089">
    <property type="entry name" value="OMPdecase_AS"/>
</dbReference>
<dbReference type="InterPro" id="IPR011995">
    <property type="entry name" value="OMPdecase_type-2"/>
</dbReference>
<dbReference type="InterPro" id="IPR001754">
    <property type="entry name" value="OMPdeCOase_dom"/>
</dbReference>
<dbReference type="InterPro" id="IPR011060">
    <property type="entry name" value="RibuloseP-bd_barrel"/>
</dbReference>
<dbReference type="NCBIfam" id="TIGR02127">
    <property type="entry name" value="pyrF_sub2"/>
    <property type="match status" value="1"/>
</dbReference>
<dbReference type="PANTHER" id="PTHR43375">
    <property type="entry name" value="OROTIDINE 5'-PHOSPHATE DECARBOXYLASE"/>
    <property type="match status" value="1"/>
</dbReference>
<dbReference type="PANTHER" id="PTHR43375:SF1">
    <property type="entry name" value="OROTIDINE 5'-PHOSPHATE DECARBOXYLASE"/>
    <property type="match status" value="1"/>
</dbReference>
<dbReference type="Pfam" id="PF00215">
    <property type="entry name" value="OMPdecase"/>
    <property type="match status" value="1"/>
</dbReference>
<dbReference type="SMART" id="SM00934">
    <property type="entry name" value="OMPdecase"/>
    <property type="match status" value="1"/>
</dbReference>
<dbReference type="SUPFAM" id="SSF51366">
    <property type="entry name" value="Ribulose-phoshate binding barrel"/>
    <property type="match status" value="1"/>
</dbReference>
<dbReference type="PROSITE" id="PS00156">
    <property type="entry name" value="OMPDECASE"/>
    <property type="match status" value="1"/>
</dbReference>